<comment type="function">
    <text evidence="1">Probable ion channel inhibitor.</text>
</comment>
<comment type="subcellular location">
    <subcellularLocation>
        <location evidence="1">Secreted</location>
    </subcellularLocation>
</comment>
<comment type="tissue specificity">
    <text>Expressed by the venom gland.</text>
</comment>
<comment type="domain">
    <text evidence="1">The presence of a 'disulfide through disulfide knot' structurally defines this protein as a knottin.</text>
</comment>
<comment type="similarity">
    <text evidence="3">Belongs to the neurotoxin 14 (magi-1) family. 01 (HNTX-16) subfamily.</text>
</comment>
<sequence>MNTVRGTFLLVFGLAASLGQADKNENRREMQKKTEQGKSYLNFAENLLLQKLEELEAKLLEKHSKKSKNSRQKRCIGKDVPCDENDPRCCSGLICLTPTLHGIWYKSYYCYKK</sequence>
<protein>
    <recommendedName>
        <fullName>U11-theraphotoxin-Hhn1m</fullName>
        <shortName>U11-TRTX-Hhn1m</shortName>
    </recommendedName>
    <alternativeName>
        <fullName>Hainantoxin-XVI-13</fullName>
        <shortName>HNTX-XVI-13</shortName>
    </alternativeName>
</protein>
<name>H16M1_CYRHA</name>
<reference key="1">
    <citation type="journal article" date="2010" name="J. Proteome Res.">
        <title>Molecular diversification of peptide toxins from the tarantula Haplopelma hainanum (Ornithoctonus hainana) venom based on transcriptomic, peptidomic, and genomic analyses.</title>
        <authorList>
            <person name="Tang X."/>
            <person name="Zhang Y."/>
            <person name="Hu W."/>
            <person name="Xu D."/>
            <person name="Tao H."/>
            <person name="Yang X."/>
            <person name="Li Y."/>
            <person name="Jiang L."/>
            <person name="Liang S."/>
        </authorList>
    </citation>
    <scope>NUCLEOTIDE SEQUENCE [LARGE SCALE MRNA]</scope>
    <source>
        <tissue>Venom gland</tissue>
    </source>
</reference>
<dbReference type="EMBL" id="GU292960">
    <property type="protein sequence ID" value="ADB56776.1"/>
    <property type="molecule type" value="mRNA"/>
</dbReference>
<dbReference type="SMR" id="D2Y283"/>
<dbReference type="ArachnoServer" id="AS002042">
    <property type="toxin name" value="U11-theraphotoxin-Hhn1m"/>
</dbReference>
<dbReference type="GO" id="GO:0005576">
    <property type="term" value="C:extracellular region"/>
    <property type="evidence" value="ECO:0007669"/>
    <property type="project" value="UniProtKB-SubCell"/>
</dbReference>
<dbReference type="GO" id="GO:0019871">
    <property type="term" value="F:sodium channel inhibitor activity"/>
    <property type="evidence" value="ECO:0007669"/>
    <property type="project" value="InterPro"/>
</dbReference>
<dbReference type="GO" id="GO:0090729">
    <property type="term" value="F:toxin activity"/>
    <property type="evidence" value="ECO:0007669"/>
    <property type="project" value="UniProtKB-KW"/>
</dbReference>
<dbReference type="InterPro" id="IPR012627">
    <property type="entry name" value="Toxin_22"/>
</dbReference>
<dbReference type="Pfam" id="PF08092">
    <property type="entry name" value="Toxin_22"/>
    <property type="match status" value="1"/>
</dbReference>
<organism>
    <name type="scientific">Cyriopagopus hainanus</name>
    <name type="common">Chinese bird spider</name>
    <name type="synonym">Haplopelma hainanum</name>
    <dbReference type="NCBI Taxonomy" id="209901"/>
    <lineage>
        <taxon>Eukaryota</taxon>
        <taxon>Metazoa</taxon>
        <taxon>Ecdysozoa</taxon>
        <taxon>Arthropoda</taxon>
        <taxon>Chelicerata</taxon>
        <taxon>Arachnida</taxon>
        <taxon>Araneae</taxon>
        <taxon>Mygalomorphae</taxon>
        <taxon>Theraphosidae</taxon>
        <taxon>Haplopelma</taxon>
    </lineage>
</organism>
<feature type="signal peptide" evidence="2">
    <location>
        <begin position="1"/>
        <end position="21"/>
    </location>
</feature>
<feature type="propeptide" id="PRO_0000400941" evidence="1">
    <location>
        <begin position="22"/>
        <end position="74"/>
    </location>
</feature>
<feature type="peptide" id="PRO_0000400942" description="U11-theraphotoxin-Hhn1m">
    <location>
        <begin position="75"/>
        <end position="113"/>
    </location>
</feature>
<feature type="disulfide bond" evidence="1">
    <location>
        <begin position="75"/>
        <end position="90"/>
    </location>
</feature>
<feature type="disulfide bond" evidence="1">
    <location>
        <begin position="82"/>
        <end position="95"/>
    </location>
</feature>
<feature type="disulfide bond" evidence="1">
    <location>
        <begin position="89"/>
        <end position="110"/>
    </location>
</feature>
<accession>D2Y283</accession>
<keyword id="KW-1015">Disulfide bond</keyword>
<keyword id="KW-0872">Ion channel impairing toxin</keyword>
<keyword id="KW-0960">Knottin</keyword>
<keyword id="KW-0964">Secreted</keyword>
<keyword id="KW-0732">Signal</keyword>
<keyword id="KW-0800">Toxin</keyword>
<proteinExistence type="evidence at transcript level"/>
<evidence type="ECO:0000250" key="1"/>
<evidence type="ECO:0000255" key="2"/>
<evidence type="ECO:0000305" key="3"/>